<reference key="1">
    <citation type="journal article" date="2005" name="Science">
        <title>The transcriptional landscape of the mammalian genome.</title>
        <authorList>
            <person name="Carninci P."/>
            <person name="Kasukawa T."/>
            <person name="Katayama S."/>
            <person name="Gough J."/>
            <person name="Frith M.C."/>
            <person name="Maeda N."/>
            <person name="Oyama R."/>
            <person name="Ravasi T."/>
            <person name="Lenhard B."/>
            <person name="Wells C."/>
            <person name="Kodzius R."/>
            <person name="Shimokawa K."/>
            <person name="Bajic V.B."/>
            <person name="Brenner S.E."/>
            <person name="Batalov S."/>
            <person name="Forrest A.R."/>
            <person name="Zavolan M."/>
            <person name="Davis M.J."/>
            <person name="Wilming L.G."/>
            <person name="Aidinis V."/>
            <person name="Allen J.E."/>
            <person name="Ambesi-Impiombato A."/>
            <person name="Apweiler R."/>
            <person name="Aturaliya R.N."/>
            <person name="Bailey T.L."/>
            <person name="Bansal M."/>
            <person name="Baxter L."/>
            <person name="Beisel K.W."/>
            <person name="Bersano T."/>
            <person name="Bono H."/>
            <person name="Chalk A.M."/>
            <person name="Chiu K.P."/>
            <person name="Choudhary V."/>
            <person name="Christoffels A."/>
            <person name="Clutterbuck D.R."/>
            <person name="Crowe M.L."/>
            <person name="Dalla E."/>
            <person name="Dalrymple B.P."/>
            <person name="de Bono B."/>
            <person name="Della Gatta G."/>
            <person name="di Bernardo D."/>
            <person name="Down T."/>
            <person name="Engstrom P."/>
            <person name="Fagiolini M."/>
            <person name="Faulkner G."/>
            <person name="Fletcher C.F."/>
            <person name="Fukushima T."/>
            <person name="Furuno M."/>
            <person name="Futaki S."/>
            <person name="Gariboldi M."/>
            <person name="Georgii-Hemming P."/>
            <person name="Gingeras T.R."/>
            <person name="Gojobori T."/>
            <person name="Green R.E."/>
            <person name="Gustincich S."/>
            <person name="Harbers M."/>
            <person name="Hayashi Y."/>
            <person name="Hensch T.K."/>
            <person name="Hirokawa N."/>
            <person name="Hill D."/>
            <person name="Huminiecki L."/>
            <person name="Iacono M."/>
            <person name="Ikeo K."/>
            <person name="Iwama A."/>
            <person name="Ishikawa T."/>
            <person name="Jakt M."/>
            <person name="Kanapin A."/>
            <person name="Katoh M."/>
            <person name="Kawasawa Y."/>
            <person name="Kelso J."/>
            <person name="Kitamura H."/>
            <person name="Kitano H."/>
            <person name="Kollias G."/>
            <person name="Krishnan S.P."/>
            <person name="Kruger A."/>
            <person name="Kummerfeld S.K."/>
            <person name="Kurochkin I.V."/>
            <person name="Lareau L.F."/>
            <person name="Lazarevic D."/>
            <person name="Lipovich L."/>
            <person name="Liu J."/>
            <person name="Liuni S."/>
            <person name="McWilliam S."/>
            <person name="Madan Babu M."/>
            <person name="Madera M."/>
            <person name="Marchionni L."/>
            <person name="Matsuda H."/>
            <person name="Matsuzawa S."/>
            <person name="Miki H."/>
            <person name="Mignone F."/>
            <person name="Miyake S."/>
            <person name="Morris K."/>
            <person name="Mottagui-Tabar S."/>
            <person name="Mulder N."/>
            <person name="Nakano N."/>
            <person name="Nakauchi H."/>
            <person name="Ng P."/>
            <person name="Nilsson R."/>
            <person name="Nishiguchi S."/>
            <person name="Nishikawa S."/>
            <person name="Nori F."/>
            <person name="Ohara O."/>
            <person name="Okazaki Y."/>
            <person name="Orlando V."/>
            <person name="Pang K.C."/>
            <person name="Pavan W.J."/>
            <person name="Pavesi G."/>
            <person name="Pesole G."/>
            <person name="Petrovsky N."/>
            <person name="Piazza S."/>
            <person name="Reed J."/>
            <person name="Reid J.F."/>
            <person name="Ring B.Z."/>
            <person name="Ringwald M."/>
            <person name="Rost B."/>
            <person name="Ruan Y."/>
            <person name="Salzberg S.L."/>
            <person name="Sandelin A."/>
            <person name="Schneider C."/>
            <person name="Schoenbach C."/>
            <person name="Sekiguchi K."/>
            <person name="Semple C.A."/>
            <person name="Seno S."/>
            <person name="Sessa L."/>
            <person name="Sheng Y."/>
            <person name="Shibata Y."/>
            <person name="Shimada H."/>
            <person name="Shimada K."/>
            <person name="Silva D."/>
            <person name="Sinclair B."/>
            <person name="Sperling S."/>
            <person name="Stupka E."/>
            <person name="Sugiura K."/>
            <person name="Sultana R."/>
            <person name="Takenaka Y."/>
            <person name="Taki K."/>
            <person name="Tammoja K."/>
            <person name="Tan S.L."/>
            <person name="Tang S."/>
            <person name="Taylor M.S."/>
            <person name="Tegner J."/>
            <person name="Teichmann S.A."/>
            <person name="Ueda H.R."/>
            <person name="van Nimwegen E."/>
            <person name="Verardo R."/>
            <person name="Wei C.L."/>
            <person name="Yagi K."/>
            <person name="Yamanishi H."/>
            <person name="Zabarovsky E."/>
            <person name="Zhu S."/>
            <person name="Zimmer A."/>
            <person name="Hide W."/>
            <person name="Bult C."/>
            <person name="Grimmond S.M."/>
            <person name="Teasdale R.D."/>
            <person name="Liu E.T."/>
            <person name="Brusic V."/>
            <person name="Quackenbush J."/>
            <person name="Wahlestedt C."/>
            <person name="Mattick J.S."/>
            <person name="Hume D.A."/>
            <person name="Kai C."/>
            <person name="Sasaki D."/>
            <person name="Tomaru Y."/>
            <person name="Fukuda S."/>
            <person name="Kanamori-Katayama M."/>
            <person name="Suzuki M."/>
            <person name="Aoki J."/>
            <person name="Arakawa T."/>
            <person name="Iida J."/>
            <person name="Imamura K."/>
            <person name="Itoh M."/>
            <person name="Kato T."/>
            <person name="Kawaji H."/>
            <person name="Kawagashira N."/>
            <person name="Kawashima T."/>
            <person name="Kojima M."/>
            <person name="Kondo S."/>
            <person name="Konno H."/>
            <person name="Nakano K."/>
            <person name="Ninomiya N."/>
            <person name="Nishio T."/>
            <person name="Okada M."/>
            <person name="Plessy C."/>
            <person name="Shibata K."/>
            <person name="Shiraki T."/>
            <person name="Suzuki S."/>
            <person name="Tagami M."/>
            <person name="Waki K."/>
            <person name="Watahiki A."/>
            <person name="Okamura-Oho Y."/>
            <person name="Suzuki H."/>
            <person name="Kawai J."/>
            <person name="Hayashizaki Y."/>
        </authorList>
    </citation>
    <scope>NUCLEOTIDE SEQUENCE [LARGE SCALE MRNA]</scope>
    <source>
        <strain>NOD</strain>
        <tissue>Dendritic cell</tissue>
    </source>
</reference>
<reference key="2">
    <citation type="journal article" date="2004" name="Genome Res.">
        <title>The status, quality, and expansion of the NIH full-length cDNA project: the Mammalian Gene Collection (MGC).</title>
        <authorList>
            <consortium name="The MGC Project Team"/>
        </authorList>
    </citation>
    <scope>NUCLEOTIDE SEQUENCE [LARGE SCALE MRNA]</scope>
    <source>
        <strain>C57BL/6J</strain>
        <tissue>Brain</tissue>
    </source>
</reference>
<reference key="3">
    <citation type="journal article" date="2007" name="J. Biol. Chem.">
        <title>Discovery and characterization of a second mammalian thiol dioxygenase, cysteamine dioxygenase.</title>
        <authorList>
            <person name="Dominy J.E. Jr."/>
            <person name="Simmons C.R."/>
            <person name="Hirschberger L.L."/>
            <person name="Hwang J."/>
            <person name="Coloso R.M."/>
            <person name="Stipanuk M.H."/>
        </authorList>
    </citation>
    <scope>FUNCTION</scope>
    <scope>CATALYTIC ACTIVITY</scope>
    <scope>COFACTOR</scope>
    <scope>TISSUE SPECIFICITY</scope>
    <scope>BIOPHYSICOCHEMICAL PROPERTIES</scope>
    <scope>MUTAGENESIS OF HIS-102</scope>
    <scope>IRON-BINDING SITE</scope>
</reference>
<reference key="4">
    <citation type="journal article" date="2010" name="Cell">
        <title>A tissue-specific atlas of mouse protein phosphorylation and expression.</title>
        <authorList>
            <person name="Huttlin E.L."/>
            <person name="Jedrychowski M.P."/>
            <person name="Elias J.E."/>
            <person name="Goswami T."/>
            <person name="Rad R."/>
            <person name="Beausoleil S.A."/>
            <person name="Villen J."/>
            <person name="Haas W."/>
            <person name="Sowa M.E."/>
            <person name="Gygi S.P."/>
        </authorList>
    </citation>
    <scope>IDENTIFICATION BY MASS SPECTROMETRY [LARGE SCALE ANALYSIS]</scope>
    <source>
        <tissue>Brain</tissue>
        <tissue>Heart</tissue>
        <tissue>Lung</tissue>
        <tissue>Pancreas</tissue>
        <tissue>Spleen</tissue>
        <tissue>Testis</tissue>
    </source>
</reference>
<reference key="5">
    <citation type="journal article" date="2020" name="J. Biol. Chem.">
        <title>Characterization of the nonheme iron center of cysteamine dioxygenase and its interaction with substrates.</title>
        <authorList>
            <person name="Wang Y."/>
            <person name="Davis I."/>
            <person name="Chan Y."/>
            <person name="Naik S.G."/>
            <person name="Griffith W.P."/>
            <person name="Liu A."/>
        </authorList>
    </citation>
    <scope>FUNCTION</scope>
    <scope>CATALYTIC ACTIVITY</scope>
</reference>
<reference evidence="8" key="6">
    <citation type="journal article" date="2021" name="Biochemistry">
        <title>The Crystal Structure of Cysteamine Dioxygenase Reveals the Origin of the Large Substrate Scope of This Vital Mammalian Enzyme.</title>
        <authorList>
            <person name="Fernandez R.L."/>
            <person name="Elmendorf L.D."/>
            <person name="Smith R.W."/>
            <person name="Bingman C.A."/>
            <person name="Fox B.G."/>
            <person name="Brunold T.C."/>
        </authorList>
    </citation>
    <scope>X-RAY CRYSTALLOGRAPHY (1.90 ANGSTROMS)</scope>
    <scope>SUBUNIT</scope>
    <scope>COFACTOR</scope>
    <scope>IRON-BINDING SITES</scope>
</reference>
<keyword id="KW-0002">3D-structure</keyword>
<keyword id="KW-0223">Dioxygenase</keyword>
<keyword id="KW-0408">Iron</keyword>
<keyword id="KW-0479">Metal-binding</keyword>
<keyword id="KW-0560">Oxidoreductase</keyword>
<keyword id="KW-1185">Reference proteome</keyword>
<feature type="chain" id="PRO_0000089785" description="2-aminoethanethiol dioxygenase">
    <location>
        <begin position="1"/>
        <end position="256"/>
    </location>
</feature>
<feature type="binding site" evidence="4 8">
    <location>
        <position position="100"/>
    </location>
    <ligand>
        <name>Fe cation</name>
        <dbReference type="ChEBI" id="CHEBI:24875"/>
        <note>catalytic</note>
    </ligand>
</feature>
<feature type="binding site" evidence="2 4 8">
    <location>
        <position position="102"/>
    </location>
    <ligand>
        <name>Fe cation</name>
        <dbReference type="ChEBI" id="CHEBI:24875"/>
        <note>catalytic</note>
    </ligand>
</feature>
<feature type="binding site" evidence="4 8">
    <location>
        <position position="179"/>
    </location>
    <ligand>
        <name>Fe cation</name>
        <dbReference type="ChEBI" id="CHEBI:24875"/>
        <note>catalytic</note>
    </ligand>
</feature>
<feature type="mutagenesis site" description="Loss of enzyme activity and iron incorporation." evidence="2">
    <original>H</original>
    <variation>A</variation>
    <location>
        <position position="102"/>
    </location>
</feature>
<feature type="helix" evidence="9">
    <location>
        <begin position="9"/>
        <end position="20"/>
    </location>
</feature>
<feature type="helix" evidence="9">
    <location>
        <begin position="35"/>
        <end position="47"/>
    </location>
</feature>
<feature type="helix" evidence="9">
    <location>
        <begin position="51"/>
        <end position="54"/>
    </location>
</feature>
<feature type="strand" evidence="9">
    <location>
        <begin position="72"/>
        <end position="80"/>
    </location>
</feature>
<feature type="strand" evidence="9">
    <location>
        <begin position="85"/>
        <end position="91"/>
    </location>
</feature>
<feature type="strand" evidence="9">
    <location>
        <begin position="96"/>
        <end position="100"/>
    </location>
</feature>
<feature type="strand" evidence="9">
    <location>
        <begin position="106"/>
        <end position="123"/>
    </location>
</feature>
<feature type="strand" evidence="9">
    <location>
        <begin position="139"/>
        <end position="141"/>
    </location>
</feature>
<feature type="helix" evidence="9">
    <location>
        <begin position="145"/>
        <end position="150"/>
    </location>
</feature>
<feature type="strand" evidence="9">
    <location>
        <begin position="152"/>
        <end position="163"/>
    </location>
</feature>
<feature type="strand" evidence="9">
    <location>
        <begin position="169"/>
        <end position="172"/>
    </location>
</feature>
<feature type="strand" evidence="9">
    <location>
        <begin position="178"/>
        <end position="196"/>
    </location>
</feature>
<feature type="helix" evidence="9">
    <location>
        <begin position="200"/>
        <end position="202"/>
    </location>
</feature>
<feature type="strand" evidence="9">
    <location>
        <begin position="208"/>
        <end position="212"/>
    </location>
</feature>
<feature type="strand" evidence="9">
    <location>
        <begin position="227"/>
        <end position="236"/>
    </location>
</feature>
<feature type="strand" evidence="9">
    <location>
        <begin position="244"/>
        <end position="246"/>
    </location>
</feature>
<organism>
    <name type="scientific">Mus musculus</name>
    <name type="common">Mouse</name>
    <dbReference type="NCBI Taxonomy" id="10090"/>
    <lineage>
        <taxon>Eukaryota</taxon>
        <taxon>Metazoa</taxon>
        <taxon>Chordata</taxon>
        <taxon>Craniata</taxon>
        <taxon>Vertebrata</taxon>
        <taxon>Euteleostomi</taxon>
        <taxon>Mammalia</taxon>
        <taxon>Eutheria</taxon>
        <taxon>Euarchontoglires</taxon>
        <taxon>Glires</taxon>
        <taxon>Rodentia</taxon>
        <taxon>Myomorpha</taxon>
        <taxon>Muroidea</taxon>
        <taxon>Muridae</taxon>
        <taxon>Murinae</taxon>
        <taxon>Mus</taxon>
        <taxon>Mus</taxon>
    </lineage>
</organism>
<comment type="function">
    <text evidence="1 2 3">Plays a vital role in regulating thiol metabolism and preserving oxygen homeostasis by oxidizing the sulfur of cysteamine and N-terminal cysteine-containing proteins to their corresponding sulfinic acids using O2 as a cosubstrate (PubMed:17581819, PubMed:32601061). Catalyzes the oxidation of cysteamine (2-aminoethanethiol) to hypotaurine (PubMed:17581819, PubMed:32601061). Catalyzes the oxidation of the regulator of G-protein signaling 5 (RGS5) (PubMed:32601061). Also oxidizes proteins RGS4 and interleukin-32 (IL32) (By similarity).</text>
</comment>
<comment type="catalytic activity">
    <reaction evidence="2 3">
        <text>cysteamine + O2 = hypotaurine + H(+)</text>
        <dbReference type="Rhea" id="RHEA:14409"/>
        <dbReference type="ChEBI" id="CHEBI:15378"/>
        <dbReference type="ChEBI" id="CHEBI:15379"/>
        <dbReference type="ChEBI" id="CHEBI:57853"/>
        <dbReference type="ChEBI" id="CHEBI:58029"/>
        <dbReference type="EC" id="1.13.11.19"/>
    </reaction>
    <physiologicalReaction direction="left-to-right" evidence="6">
        <dbReference type="Rhea" id="RHEA:14410"/>
    </physiologicalReaction>
</comment>
<comment type="catalytic activity">
    <reaction evidence="3">
        <text>N-terminal L-cysteinyl-[protein] + O2 = N-terminal S-hydroxy-S-oxy-L-cysteinyl-[protein] + H(+)</text>
        <dbReference type="Rhea" id="RHEA:70895"/>
        <dbReference type="Rhea" id="RHEA-COMP:12707"/>
        <dbReference type="Rhea" id="RHEA-COMP:17973"/>
        <dbReference type="ChEBI" id="CHEBI:15378"/>
        <dbReference type="ChEBI" id="CHEBI:15379"/>
        <dbReference type="ChEBI" id="CHEBI:65250"/>
        <dbReference type="ChEBI" id="CHEBI:156254"/>
    </reaction>
    <physiologicalReaction direction="left-to-right" evidence="7">
        <dbReference type="Rhea" id="RHEA:70896"/>
    </physiologicalReaction>
</comment>
<comment type="cofactor">
    <cofactor evidence="2 4">
        <name>Fe cation</name>
        <dbReference type="ChEBI" id="CHEBI:24875"/>
    </cofactor>
</comment>
<comment type="biophysicochemical properties">
    <kinetics>
        <KM evidence="2">3.8 mM for cysteamine</KM>
        <Vmax evidence="2">2300.0 nmol/min/mg enzyme for cysteamine</Vmax>
    </kinetics>
</comment>
<comment type="subunit">
    <text evidence="4">Monomer.</text>
</comment>
<comment type="tissue specificity">
    <text evidence="2">Ubiquitous, with highest expression in brain, heart and skeletal muscle (at protein level).</text>
</comment>
<comment type="sequence caution" evidence="5">
    <conflict type="erroneous initiation">
        <sequence resource="EMBL-CDS" id="AAH57106"/>
    </conflict>
    <text>Truncated N-terminus.</text>
</comment>
<comment type="sequence caution" evidence="5">
    <conflict type="erroneous initiation">
        <sequence resource="EMBL-CDS" id="AAH58407"/>
    </conflict>
    <text>Truncated N-terminus.</text>
</comment>
<dbReference type="EC" id="1.13.11.19" evidence="2 3"/>
<dbReference type="EMBL" id="AK155334">
    <property type="protein sequence ID" value="BAE33200.1"/>
    <property type="molecule type" value="mRNA"/>
</dbReference>
<dbReference type="EMBL" id="BC057106">
    <property type="protein sequence ID" value="AAH57106.1"/>
    <property type="status" value="ALT_INIT"/>
    <property type="molecule type" value="mRNA"/>
</dbReference>
<dbReference type="EMBL" id="BC058407">
    <property type="protein sequence ID" value="AAH58407.1"/>
    <property type="status" value="ALT_INIT"/>
    <property type="molecule type" value="mRNA"/>
</dbReference>
<dbReference type="CCDS" id="CCDS48588.1"/>
<dbReference type="RefSeq" id="NP_001005419.2">
    <property type="nucleotide sequence ID" value="NM_001005419.2"/>
</dbReference>
<dbReference type="PDB" id="7LVZ">
    <property type="method" value="X-ray"/>
    <property type="resolution" value="1.89 A"/>
    <property type="chains" value="A/B/C/D=1-256"/>
</dbReference>
<dbReference type="PDBsum" id="7LVZ"/>
<dbReference type="SMR" id="Q6PDY2"/>
<dbReference type="FunCoup" id="Q6PDY2">
    <property type="interactions" value="2315"/>
</dbReference>
<dbReference type="IntAct" id="Q6PDY2">
    <property type="interactions" value="1"/>
</dbReference>
<dbReference type="STRING" id="10090.ENSMUSP00000075107"/>
<dbReference type="GlyGen" id="Q6PDY2">
    <property type="glycosylation" value="3 sites, 1 N-linked glycan (1 site), 1 O-linked glycan (2 sites)"/>
</dbReference>
<dbReference type="iPTMnet" id="Q6PDY2"/>
<dbReference type="PhosphoSitePlus" id="Q6PDY2"/>
<dbReference type="SwissPalm" id="Q6PDY2"/>
<dbReference type="PaxDb" id="10090-ENSMUSP00000075107"/>
<dbReference type="PeptideAtlas" id="Q6PDY2"/>
<dbReference type="ProteomicsDB" id="296192"/>
<dbReference type="Pumba" id="Q6PDY2"/>
<dbReference type="Antibodypedia" id="45164">
    <property type="antibodies" value="187 antibodies from 25 providers"/>
</dbReference>
<dbReference type="DNASU" id="211488"/>
<dbReference type="Ensembl" id="ENSMUST00000075686.7">
    <property type="protein sequence ID" value="ENSMUSP00000075107.5"/>
    <property type="gene ID" value="ENSMUSG00000057134.8"/>
</dbReference>
<dbReference type="GeneID" id="211488"/>
<dbReference type="KEGG" id="mmu:211488"/>
<dbReference type="UCSC" id="uc007flz.2">
    <property type="organism name" value="mouse"/>
</dbReference>
<dbReference type="AGR" id="MGI:2685083"/>
<dbReference type="CTD" id="84890"/>
<dbReference type="MGI" id="MGI:2685083">
    <property type="gene designation" value="Ado"/>
</dbReference>
<dbReference type="VEuPathDB" id="HostDB:ENSMUSG00000057134"/>
<dbReference type="eggNOG" id="KOG4281">
    <property type="taxonomic scope" value="Eukaryota"/>
</dbReference>
<dbReference type="GeneTree" id="ENSGT00390000014082"/>
<dbReference type="HOGENOM" id="CLU_061320_2_1_1"/>
<dbReference type="InParanoid" id="Q6PDY2"/>
<dbReference type="OMA" id="RCIWGKL"/>
<dbReference type="OrthoDB" id="271433at2759"/>
<dbReference type="PhylomeDB" id="Q6PDY2"/>
<dbReference type="TreeFam" id="TF314673"/>
<dbReference type="BRENDA" id="1.13.11.19">
    <property type="organism ID" value="3474"/>
</dbReference>
<dbReference type="Reactome" id="R-MMU-1614558">
    <property type="pathway name" value="Degradation of cysteine and homocysteine"/>
</dbReference>
<dbReference type="BioGRID-ORCS" id="211488">
    <property type="hits" value="7 hits in 78 CRISPR screens"/>
</dbReference>
<dbReference type="PRO" id="PR:Q6PDY2"/>
<dbReference type="Proteomes" id="UP000000589">
    <property type="component" value="Chromosome 10"/>
</dbReference>
<dbReference type="RNAct" id="Q6PDY2">
    <property type="molecule type" value="protein"/>
</dbReference>
<dbReference type="Bgee" id="ENSMUSG00000057134">
    <property type="expression patterns" value="Expressed in neural tube and 68 other cell types or tissues"/>
</dbReference>
<dbReference type="GO" id="GO:0005739">
    <property type="term" value="C:mitochondrion"/>
    <property type="evidence" value="ECO:0007005"/>
    <property type="project" value="MGI"/>
</dbReference>
<dbReference type="GO" id="GO:0047800">
    <property type="term" value="F:cysteamine dioxygenase activity"/>
    <property type="evidence" value="ECO:0000314"/>
    <property type="project" value="UniProtKB"/>
</dbReference>
<dbReference type="GO" id="GO:0005506">
    <property type="term" value="F:iron ion binding"/>
    <property type="evidence" value="ECO:0000314"/>
    <property type="project" value="UniProtKB"/>
</dbReference>
<dbReference type="GO" id="GO:0071456">
    <property type="term" value="P:cellular response to hypoxia"/>
    <property type="evidence" value="ECO:0000250"/>
    <property type="project" value="UniProtKB"/>
</dbReference>
<dbReference type="CDD" id="cd20289">
    <property type="entry name" value="cupin_ADO"/>
    <property type="match status" value="1"/>
</dbReference>
<dbReference type="FunFam" id="2.60.120.10:FF:000096">
    <property type="entry name" value="2-aminoethanethiol dioxygenase"/>
    <property type="match status" value="1"/>
</dbReference>
<dbReference type="Gene3D" id="2.60.120.10">
    <property type="entry name" value="Jelly Rolls"/>
    <property type="match status" value="1"/>
</dbReference>
<dbReference type="InterPro" id="IPR012864">
    <property type="entry name" value="PCO/ADO"/>
</dbReference>
<dbReference type="InterPro" id="IPR014710">
    <property type="entry name" value="RmlC-like_jellyroll"/>
</dbReference>
<dbReference type="InterPro" id="IPR011051">
    <property type="entry name" value="RmlC_Cupin_sf"/>
</dbReference>
<dbReference type="PANTHER" id="PTHR22966">
    <property type="entry name" value="2-AMINOETHANETHIOL DIOXYGENASE"/>
    <property type="match status" value="1"/>
</dbReference>
<dbReference type="PANTHER" id="PTHR22966:SF61">
    <property type="entry name" value="2-AMINOETHANETHIOL DIOXYGENASE"/>
    <property type="match status" value="1"/>
</dbReference>
<dbReference type="Pfam" id="PF07847">
    <property type="entry name" value="PCO_ADO"/>
    <property type="match status" value="1"/>
</dbReference>
<dbReference type="SUPFAM" id="SSF51182">
    <property type="entry name" value="RmlC-like cupins"/>
    <property type="match status" value="1"/>
</dbReference>
<sequence>MPRDNMASLIQRIARQACLTFRGSSTGSEGPAPGFPENLSLLKSLLTQVRAEDLNIAPRKALPQPLPRNLPPVTYMHIYETEGFSLGVFLLKSGTCIPLHDHPGMHGMLKVLYGTVRISCMDKLDTGAGHRRPPPEQQFEPPLQPLEREAVRPGVLRSRAEYTEASGPCVLTPHRDNLHQIDAVDGPAAFLDILAPPYDPEDGRDCHYYRVVEPIRPKEASGSACDLPREVWLLETPQADDFWCEGEPYPGPKVLP</sequence>
<protein>
    <recommendedName>
        <fullName>2-aminoethanethiol dioxygenase</fullName>
        <ecNumber evidence="2 3">1.13.11.19</ecNumber>
    </recommendedName>
    <alternativeName>
        <fullName>Cysteamine dioxygenase</fullName>
    </alternativeName>
</protein>
<name>AEDO_MOUSE</name>
<gene>
    <name type="primary">Ado</name>
    <name type="synonym">Gm237</name>
</gene>
<evidence type="ECO:0000250" key="1">
    <source>
        <dbReference type="UniProtKB" id="Q96SZ5"/>
    </source>
</evidence>
<evidence type="ECO:0000269" key="2">
    <source>
    </source>
</evidence>
<evidence type="ECO:0000269" key="3">
    <source>
    </source>
</evidence>
<evidence type="ECO:0000269" key="4">
    <source>
    </source>
</evidence>
<evidence type="ECO:0000305" key="5"/>
<evidence type="ECO:0000305" key="6">
    <source>
    </source>
</evidence>
<evidence type="ECO:0000305" key="7">
    <source>
    </source>
</evidence>
<evidence type="ECO:0007744" key="8">
    <source>
        <dbReference type="PDB" id="7LVZ"/>
    </source>
</evidence>
<evidence type="ECO:0007829" key="9">
    <source>
        <dbReference type="PDB" id="7LVZ"/>
    </source>
</evidence>
<proteinExistence type="evidence at protein level"/>
<accession>Q6PDY2</accession>
<accession>Q3U2E1</accession>